<accession>A7NIF2</accession>
<organism>
    <name type="scientific">Roseiflexus castenholzii (strain DSM 13941 / HLO8)</name>
    <dbReference type="NCBI Taxonomy" id="383372"/>
    <lineage>
        <taxon>Bacteria</taxon>
        <taxon>Bacillati</taxon>
        <taxon>Chloroflexota</taxon>
        <taxon>Chloroflexia</taxon>
        <taxon>Chloroflexales</taxon>
        <taxon>Roseiflexineae</taxon>
        <taxon>Roseiflexaceae</taxon>
        <taxon>Roseiflexus</taxon>
    </lineage>
</organism>
<name>GLYA_ROSCS</name>
<keyword id="KW-0028">Amino-acid biosynthesis</keyword>
<keyword id="KW-0963">Cytoplasm</keyword>
<keyword id="KW-0554">One-carbon metabolism</keyword>
<keyword id="KW-0663">Pyridoxal phosphate</keyword>
<keyword id="KW-1185">Reference proteome</keyword>
<keyword id="KW-0808">Transferase</keyword>
<dbReference type="EC" id="2.1.2.1" evidence="1"/>
<dbReference type="EMBL" id="CP000804">
    <property type="protein sequence ID" value="ABU57252.1"/>
    <property type="molecule type" value="Genomic_DNA"/>
</dbReference>
<dbReference type="RefSeq" id="WP_012119682.1">
    <property type="nucleotide sequence ID" value="NC_009767.1"/>
</dbReference>
<dbReference type="SMR" id="A7NIF2"/>
<dbReference type="STRING" id="383372.Rcas_1155"/>
<dbReference type="KEGG" id="rca:Rcas_1155"/>
<dbReference type="eggNOG" id="COG0112">
    <property type="taxonomic scope" value="Bacteria"/>
</dbReference>
<dbReference type="HOGENOM" id="CLU_022477_2_1_0"/>
<dbReference type="OrthoDB" id="9803846at2"/>
<dbReference type="UniPathway" id="UPA00193"/>
<dbReference type="UniPathway" id="UPA00288">
    <property type="reaction ID" value="UER01023"/>
</dbReference>
<dbReference type="Proteomes" id="UP000000263">
    <property type="component" value="Chromosome"/>
</dbReference>
<dbReference type="GO" id="GO:0005829">
    <property type="term" value="C:cytosol"/>
    <property type="evidence" value="ECO:0007669"/>
    <property type="project" value="TreeGrafter"/>
</dbReference>
<dbReference type="GO" id="GO:0004372">
    <property type="term" value="F:glycine hydroxymethyltransferase activity"/>
    <property type="evidence" value="ECO:0007669"/>
    <property type="project" value="UniProtKB-UniRule"/>
</dbReference>
<dbReference type="GO" id="GO:0030170">
    <property type="term" value="F:pyridoxal phosphate binding"/>
    <property type="evidence" value="ECO:0007669"/>
    <property type="project" value="UniProtKB-UniRule"/>
</dbReference>
<dbReference type="GO" id="GO:0019264">
    <property type="term" value="P:glycine biosynthetic process from serine"/>
    <property type="evidence" value="ECO:0007669"/>
    <property type="project" value="UniProtKB-UniRule"/>
</dbReference>
<dbReference type="GO" id="GO:0035999">
    <property type="term" value="P:tetrahydrofolate interconversion"/>
    <property type="evidence" value="ECO:0007669"/>
    <property type="project" value="UniProtKB-UniRule"/>
</dbReference>
<dbReference type="CDD" id="cd00378">
    <property type="entry name" value="SHMT"/>
    <property type="match status" value="1"/>
</dbReference>
<dbReference type="FunFam" id="3.40.640.10:FF:000001">
    <property type="entry name" value="Serine hydroxymethyltransferase"/>
    <property type="match status" value="1"/>
</dbReference>
<dbReference type="FunFam" id="3.90.1150.10:FF:000003">
    <property type="entry name" value="Serine hydroxymethyltransferase"/>
    <property type="match status" value="1"/>
</dbReference>
<dbReference type="Gene3D" id="3.90.1150.10">
    <property type="entry name" value="Aspartate Aminotransferase, domain 1"/>
    <property type="match status" value="1"/>
</dbReference>
<dbReference type="Gene3D" id="3.40.640.10">
    <property type="entry name" value="Type I PLP-dependent aspartate aminotransferase-like (Major domain)"/>
    <property type="match status" value="1"/>
</dbReference>
<dbReference type="HAMAP" id="MF_00051">
    <property type="entry name" value="SHMT"/>
    <property type="match status" value="1"/>
</dbReference>
<dbReference type="InterPro" id="IPR015424">
    <property type="entry name" value="PyrdxlP-dep_Trfase"/>
</dbReference>
<dbReference type="InterPro" id="IPR015421">
    <property type="entry name" value="PyrdxlP-dep_Trfase_major"/>
</dbReference>
<dbReference type="InterPro" id="IPR015422">
    <property type="entry name" value="PyrdxlP-dep_Trfase_small"/>
</dbReference>
<dbReference type="InterPro" id="IPR001085">
    <property type="entry name" value="Ser_HO-MeTrfase"/>
</dbReference>
<dbReference type="InterPro" id="IPR049943">
    <property type="entry name" value="Ser_HO-MeTrfase-like"/>
</dbReference>
<dbReference type="InterPro" id="IPR019798">
    <property type="entry name" value="Ser_HO-MeTrfase_PLP_BS"/>
</dbReference>
<dbReference type="InterPro" id="IPR039429">
    <property type="entry name" value="SHMT-like_dom"/>
</dbReference>
<dbReference type="NCBIfam" id="NF000586">
    <property type="entry name" value="PRK00011.1"/>
    <property type="match status" value="1"/>
</dbReference>
<dbReference type="PANTHER" id="PTHR11680">
    <property type="entry name" value="SERINE HYDROXYMETHYLTRANSFERASE"/>
    <property type="match status" value="1"/>
</dbReference>
<dbReference type="PANTHER" id="PTHR11680:SF35">
    <property type="entry name" value="SERINE HYDROXYMETHYLTRANSFERASE 1"/>
    <property type="match status" value="1"/>
</dbReference>
<dbReference type="Pfam" id="PF00464">
    <property type="entry name" value="SHMT"/>
    <property type="match status" value="1"/>
</dbReference>
<dbReference type="PIRSF" id="PIRSF000412">
    <property type="entry name" value="SHMT"/>
    <property type="match status" value="1"/>
</dbReference>
<dbReference type="SUPFAM" id="SSF53383">
    <property type="entry name" value="PLP-dependent transferases"/>
    <property type="match status" value="1"/>
</dbReference>
<dbReference type="PROSITE" id="PS00096">
    <property type="entry name" value="SHMT"/>
    <property type="match status" value="1"/>
</dbReference>
<sequence>MSMLQTLWRSDPAVARIIDGEMRRQRDGLELIASENYASRAVMEAQGSALTNKYAEGYPGARYYGGCEWVDQVEDLARARVKELFGAEYANVQPHSGSQANMAVYFTFLRPGDKVLGMNLAHGGHLTHGSPVNFSGQLYTFVAYGIDPKTERIDYDQVAEIARRERPKMITVGASAYSRAIDFAIFRQIADEVGAFLFADIAHPAGLIAKGLLPSPIPYAHVVTSTTHKTLRGPRGGIIMMGKDFENPFGLKAAKSGRTLMMSELLDKMVIPGVQGGPLMHVIAAKAVGFGENLQPEFETYARQIIRNAQTLAGALMARGYHILSGGTDNHLMLIDLRNKGVSGKAAQEALDRAAITTNKNAVPNDDKSPLITSGIRLGTPALTTRGMKEPEMEQIAALIDDVITHINDDHTINRVREEVFALCARFPVPGLEPSA</sequence>
<comment type="function">
    <text evidence="1">Catalyzes the reversible interconversion of serine and glycine with tetrahydrofolate (THF) serving as the one-carbon carrier. This reaction serves as the major source of one-carbon groups required for the biosynthesis of purines, thymidylate, methionine, and other important biomolecules. Also exhibits THF-independent aldolase activity toward beta-hydroxyamino acids, producing glycine and aldehydes, via a retro-aldol mechanism.</text>
</comment>
<comment type="catalytic activity">
    <reaction evidence="1">
        <text>(6R)-5,10-methylene-5,6,7,8-tetrahydrofolate + glycine + H2O = (6S)-5,6,7,8-tetrahydrofolate + L-serine</text>
        <dbReference type="Rhea" id="RHEA:15481"/>
        <dbReference type="ChEBI" id="CHEBI:15377"/>
        <dbReference type="ChEBI" id="CHEBI:15636"/>
        <dbReference type="ChEBI" id="CHEBI:33384"/>
        <dbReference type="ChEBI" id="CHEBI:57305"/>
        <dbReference type="ChEBI" id="CHEBI:57453"/>
        <dbReference type="EC" id="2.1.2.1"/>
    </reaction>
</comment>
<comment type="cofactor">
    <cofactor evidence="1">
        <name>pyridoxal 5'-phosphate</name>
        <dbReference type="ChEBI" id="CHEBI:597326"/>
    </cofactor>
</comment>
<comment type="pathway">
    <text evidence="1">One-carbon metabolism; tetrahydrofolate interconversion.</text>
</comment>
<comment type="pathway">
    <text evidence="1">Amino-acid biosynthesis; glycine biosynthesis; glycine from L-serine: step 1/1.</text>
</comment>
<comment type="subunit">
    <text evidence="1">Homodimer.</text>
</comment>
<comment type="subcellular location">
    <subcellularLocation>
        <location evidence="1">Cytoplasm</location>
    </subcellularLocation>
</comment>
<comment type="similarity">
    <text evidence="1">Belongs to the SHMT family.</text>
</comment>
<evidence type="ECO:0000255" key="1">
    <source>
        <dbReference type="HAMAP-Rule" id="MF_00051"/>
    </source>
</evidence>
<feature type="chain" id="PRO_0000369952" description="Serine hydroxymethyltransferase">
    <location>
        <begin position="1"/>
        <end position="436"/>
    </location>
</feature>
<feature type="binding site" evidence="1">
    <location>
        <position position="120"/>
    </location>
    <ligand>
        <name>(6S)-5,6,7,8-tetrahydrofolate</name>
        <dbReference type="ChEBI" id="CHEBI:57453"/>
    </ligand>
</feature>
<feature type="binding site" evidence="1">
    <location>
        <begin position="124"/>
        <end position="126"/>
    </location>
    <ligand>
        <name>(6S)-5,6,7,8-tetrahydrofolate</name>
        <dbReference type="ChEBI" id="CHEBI:57453"/>
    </ligand>
</feature>
<feature type="site" description="Plays an important role in substrate specificity" evidence="1">
    <location>
        <position position="228"/>
    </location>
</feature>
<feature type="modified residue" description="N6-(pyridoxal phosphate)lysine" evidence="1">
    <location>
        <position position="229"/>
    </location>
</feature>
<proteinExistence type="inferred from homology"/>
<protein>
    <recommendedName>
        <fullName evidence="1">Serine hydroxymethyltransferase</fullName>
        <shortName evidence="1">SHMT</shortName>
        <shortName evidence="1">Serine methylase</shortName>
        <ecNumber evidence="1">2.1.2.1</ecNumber>
    </recommendedName>
</protein>
<gene>
    <name evidence="1" type="primary">glyA</name>
    <name type="ordered locus">Rcas_1155</name>
</gene>
<reference key="1">
    <citation type="submission" date="2007-08" db="EMBL/GenBank/DDBJ databases">
        <title>Complete sequence of Roseiflexus castenholzii DSM 13941.</title>
        <authorList>
            <consortium name="US DOE Joint Genome Institute"/>
            <person name="Copeland A."/>
            <person name="Lucas S."/>
            <person name="Lapidus A."/>
            <person name="Barry K."/>
            <person name="Glavina del Rio T."/>
            <person name="Dalin E."/>
            <person name="Tice H."/>
            <person name="Pitluck S."/>
            <person name="Thompson L.S."/>
            <person name="Brettin T."/>
            <person name="Bruce D."/>
            <person name="Detter J.C."/>
            <person name="Han C."/>
            <person name="Tapia R."/>
            <person name="Schmutz J."/>
            <person name="Larimer F."/>
            <person name="Land M."/>
            <person name="Hauser L."/>
            <person name="Kyrpides N."/>
            <person name="Mikhailova N."/>
            <person name="Bryant D.A."/>
            <person name="Hanada S."/>
            <person name="Tsukatani Y."/>
            <person name="Richardson P."/>
        </authorList>
    </citation>
    <scope>NUCLEOTIDE SEQUENCE [LARGE SCALE GENOMIC DNA]</scope>
    <source>
        <strain>DSM 13941 / HLO8</strain>
    </source>
</reference>